<sequence>MIKLHEVPPEPVDPASLPHDVNAHSPEGDGNPDKRKKIFGIPYPFSRSSCRRFLWNCQKISVLPMALYFPLHAANTLITPAVSPDSAPDDVLMMVREILPSITTKLLVAGITLHVSAGVLLRIVNNWNKPRRNRHRHLKISAEQDLSQDSIGLTGGISGYLFGLYKTFRIPPQVISGYILVPVLIYHLLIMKWVPNSISTEVDFASIKQLLSSKNRWWKWLGGLVPLAILLESGVYHIGSGLCRYFGVRKMTSRKKWSTAINLLTLVGFVSLIRLMKEDSTKLGPNQFESIFKKIRLLLHVN</sequence>
<dbReference type="EMBL" id="X92441">
    <property type="protein sequence ID" value="CAA63191.1"/>
    <property type="molecule type" value="Genomic_DNA"/>
</dbReference>
<dbReference type="EMBL" id="Z75136">
    <property type="protein sequence ID" value="CAA99448.1"/>
    <property type="molecule type" value="Genomic_DNA"/>
</dbReference>
<dbReference type="EMBL" id="AY558034">
    <property type="protein sequence ID" value="AAS56360.1"/>
    <property type="molecule type" value="Genomic_DNA"/>
</dbReference>
<dbReference type="EMBL" id="BK006948">
    <property type="protein sequence ID" value="DAA10998.1"/>
    <property type="molecule type" value="Genomic_DNA"/>
</dbReference>
<dbReference type="PIR" id="S60955">
    <property type="entry name" value="S60955"/>
</dbReference>
<dbReference type="RefSeq" id="NP_014871.3">
    <property type="nucleotide sequence ID" value="NM_001183647.3"/>
</dbReference>
<dbReference type="BioGRID" id="34621">
    <property type="interactions" value="162"/>
</dbReference>
<dbReference type="FunCoup" id="Q12106">
    <property type="interactions" value="46"/>
</dbReference>
<dbReference type="STRING" id="4932.YOR228C"/>
<dbReference type="TCDB" id="9.B.178.1.1">
    <property type="family name" value="the mdmd complementing protein 1 (mcp1) family"/>
</dbReference>
<dbReference type="PaxDb" id="4932-YOR228C"/>
<dbReference type="PeptideAtlas" id="Q12106"/>
<dbReference type="EnsemblFungi" id="YOR228C_mRNA">
    <property type="protein sequence ID" value="YOR228C"/>
    <property type="gene ID" value="YOR228C"/>
</dbReference>
<dbReference type="GeneID" id="854403"/>
<dbReference type="KEGG" id="sce:YOR228C"/>
<dbReference type="AGR" id="SGD:S000005754"/>
<dbReference type="SGD" id="S000005754">
    <property type="gene designation" value="MCP1"/>
</dbReference>
<dbReference type="VEuPathDB" id="FungiDB:YOR228C"/>
<dbReference type="eggNOG" id="ENOG502RYUN">
    <property type="taxonomic scope" value="Eukaryota"/>
</dbReference>
<dbReference type="HOGENOM" id="CLU_066681_1_0_1"/>
<dbReference type="InParanoid" id="Q12106"/>
<dbReference type="OMA" id="HLLIMKW"/>
<dbReference type="OrthoDB" id="10259513at2759"/>
<dbReference type="BioCyc" id="YEAST:G3O-33726-MONOMER"/>
<dbReference type="BioGRID-ORCS" id="854403">
    <property type="hits" value="0 hits in 10 CRISPR screens"/>
</dbReference>
<dbReference type="PRO" id="PR:Q12106"/>
<dbReference type="Proteomes" id="UP000002311">
    <property type="component" value="Chromosome XV"/>
</dbReference>
<dbReference type="RNAct" id="Q12106">
    <property type="molecule type" value="protein"/>
</dbReference>
<dbReference type="GO" id="GO:0031966">
    <property type="term" value="C:mitochondrial membrane"/>
    <property type="evidence" value="ECO:0000314"/>
    <property type="project" value="SGD"/>
</dbReference>
<dbReference type="GO" id="GO:0005741">
    <property type="term" value="C:mitochondrial outer membrane"/>
    <property type="evidence" value="ECO:0000314"/>
    <property type="project" value="SGD"/>
</dbReference>
<dbReference type="GO" id="GO:0005739">
    <property type="term" value="C:mitochondrion"/>
    <property type="evidence" value="ECO:0000314"/>
    <property type="project" value="UniProtKB"/>
</dbReference>
<dbReference type="GO" id="GO:0030674">
    <property type="term" value="F:protein-macromolecule adaptor activity"/>
    <property type="evidence" value="ECO:0000315"/>
    <property type="project" value="UniProtKB"/>
</dbReference>
<dbReference type="GO" id="GO:0055088">
    <property type="term" value="P:lipid homeostasis"/>
    <property type="evidence" value="ECO:0000316"/>
    <property type="project" value="SGD"/>
</dbReference>
<dbReference type="GO" id="GO:0007005">
    <property type="term" value="P:mitochondrion organization"/>
    <property type="evidence" value="ECO:0000316"/>
    <property type="project" value="SGD"/>
</dbReference>
<dbReference type="GO" id="GO:0070585">
    <property type="term" value="P:protein localization to mitochondrion"/>
    <property type="evidence" value="ECO:0000315"/>
    <property type="project" value="UniProtKB"/>
</dbReference>
<dbReference type="FunFam" id="1.20.1300.10:FF:000022">
    <property type="entry name" value="YOR228C-like protein"/>
    <property type="match status" value="1"/>
</dbReference>
<dbReference type="Gene3D" id="1.20.1300.10">
    <property type="entry name" value="Fumarate reductase/succinate dehydrogenase, transmembrane subunit"/>
    <property type="match status" value="1"/>
</dbReference>
<dbReference type="InterPro" id="IPR039960">
    <property type="entry name" value="MCP1"/>
</dbReference>
<dbReference type="InterPro" id="IPR012472">
    <property type="entry name" value="MCP1_TM"/>
</dbReference>
<dbReference type="InterPro" id="IPR034804">
    <property type="entry name" value="SQR/QFR_C/D"/>
</dbReference>
<dbReference type="PANTHER" id="PTHR38409">
    <property type="entry name" value="MDM10-COMPLEMENTING PROTEIN 1"/>
    <property type="match status" value="1"/>
</dbReference>
<dbReference type="PANTHER" id="PTHR38409:SF1">
    <property type="entry name" value="MITOCHONDRIAL ADAPTER PROTEIN MCP1"/>
    <property type="match status" value="1"/>
</dbReference>
<dbReference type="Pfam" id="PF07950">
    <property type="entry name" value="MCP1_TM"/>
    <property type="match status" value="2"/>
</dbReference>
<dbReference type="SUPFAM" id="SSF81343">
    <property type="entry name" value="Fumarate reductase respiratory complex transmembrane subunits"/>
    <property type="match status" value="1"/>
</dbReference>
<keyword id="KW-0472">Membrane</keyword>
<keyword id="KW-0496">Mitochondrion</keyword>
<keyword id="KW-1000">Mitochondrion outer membrane</keyword>
<keyword id="KW-1185">Reference proteome</keyword>
<keyword id="KW-0812">Transmembrane</keyword>
<keyword id="KW-1133">Transmembrane helix</keyword>
<accession>Q12106</accession>
<accession>D6W2T2</accession>
<comment type="function">
    <text evidence="5 6 7 8">Recruits the lipid transfer protein Vps13 to mitochondria thereby promoting vacuole-mitochondria contacts (PubMed:28864540, PubMed:30018089, PubMed:34830155). Involved in mitochondrial lipid homeostasis (PubMed:23781023, PubMed:28864540).</text>
</comment>
<comment type="subunit">
    <text evidence="6 7">Interacts (via PxP motif) with VPS13 (via SHR-BD domain).</text>
</comment>
<comment type="subcellular location">
    <subcellularLocation>
        <location evidence="3 4 5">Mitochondrion outer membrane</location>
        <topology evidence="1">Multi-pass membrane protein</topology>
    </subcellularLocation>
</comment>
<name>MCP1_YEAST</name>
<gene>
    <name evidence="9" type="primary">MCP1</name>
    <name evidence="13" type="ordered locus">YOR228C</name>
    <name type="ORF">YOR50-18</name>
</gene>
<evidence type="ECO:0000255" key="1"/>
<evidence type="ECO:0000256" key="2">
    <source>
        <dbReference type="SAM" id="MobiDB-lite"/>
    </source>
</evidence>
<evidence type="ECO:0000269" key="3">
    <source>
    </source>
</evidence>
<evidence type="ECO:0000269" key="4">
    <source>
    </source>
</evidence>
<evidence type="ECO:0000269" key="5">
    <source>
    </source>
</evidence>
<evidence type="ECO:0000269" key="6">
    <source>
    </source>
</evidence>
<evidence type="ECO:0000269" key="7">
    <source>
    </source>
</evidence>
<evidence type="ECO:0000269" key="8">
    <source>
    </source>
</evidence>
<evidence type="ECO:0000303" key="9">
    <source>
    </source>
</evidence>
<evidence type="ECO:0000305" key="10"/>
<evidence type="ECO:0000305" key="11">
    <source>
    </source>
</evidence>
<evidence type="ECO:0000305" key="12">
    <source>
    </source>
</evidence>
<evidence type="ECO:0000312" key="13">
    <source>
        <dbReference type="SGD" id="S000005754"/>
    </source>
</evidence>
<reference key="1">
    <citation type="journal article" date="1996" name="Yeast">
        <title>Sequence and analysis of a 33 kb fragment from the right arm of chromosome XV of the yeast Saccharomyces cerevisiae.</title>
        <authorList>
            <person name="Galisson F."/>
            <person name="Dujon B."/>
        </authorList>
    </citation>
    <scope>NUCLEOTIDE SEQUENCE [GENOMIC DNA]</scope>
    <source>
        <strain>ATCC 96604 / S288c / FY1679</strain>
    </source>
</reference>
<reference key="2">
    <citation type="journal article" date="1997" name="Nature">
        <title>The nucleotide sequence of Saccharomyces cerevisiae chromosome XV.</title>
        <authorList>
            <person name="Dujon B."/>
            <person name="Albermann K."/>
            <person name="Aldea M."/>
            <person name="Alexandraki D."/>
            <person name="Ansorge W."/>
            <person name="Arino J."/>
            <person name="Benes V."/>
            <person name="Bohn C."/>
            <person name="Bolotin-Fukuhara M."/>
            <person name="Bordonne R."/>
            <person name="Boyer J."/>
            <person name="Camasses A."/>
            <person name="Casamayor A."/>
            <person name="Casas C."/>
            <person name="Cheret G."/>
            <person name="Cziepluch C."/>
            <person name="Daignan-Fornier B."/>
            <person name="Dang V.-D."/>
            <person name="de Haan M."/>
            <person name="Delius H."/>
            <person name="Durand P."/>
            <person name="Fairhead C."/>
            <person name="Feldmann H."/>
            <person name="Gaillon L."/>
            <person name="Galisson F."/>
            <person name="Gamo F.-J."/>
            <person name="Gancedo C."/>
            <person name="Goffeau A."/>
            <person name="Goulding S.E."/>
            <person name="Grivell L.A."/>
            <person name="Habbig B."/>
            <person name="Hand N.J."/>
            <person name="Hani J."/>
            <person name="Hattenhorst U."/>
            <person name="Hebling U."/>
            <person name="Hernando Y."/>
            <person name="Herrero E."/>
            <person name="Heumann K."/>
            <person name="Hiesel R."/>
            <person name="Hilger F."/>
            <person name="Hofmann B."/>
            <person name="Hollenberg C.P."/>
            <person name="Hughes B."/>
            <person name="Jauniaux J.-C."/>
            <person name="Kalogeropoulos A."/>
            <person name="Katsoulou C."/>
            <person name="Kordes E."/>
            <person name="Lafuente M.J."/>
            <person name="Landt O."/>
            <person name="Louis E.J."/>
            <person name="Maarse A.C."/>
            <person name="Madania A."/>
            <person name="Mannhaupt G."/>
            <person name="Marck C."/>
            <person name="Martin R.P."/>
            <person name="Mewes H.-W."/>
            <person name="Michaux G."/>
            <person name="Paces V."/>
            <person name="Parle-McDermott A.G."/>
            <person name="Pearson B.M."/>
            <person name="Perrin A."/>
            <person name="Pettersson B."/>
            <person name="Poch O."/>
            <person name="Pohl T.M."/>
            <person name="Poirey R."/>
            <person name="Portetelle D."/>
            <person name="Pujol A."/>
            <person name="Purnelle B."/>
            <person name="Ramezani Rad M."/>
            <person name="Rechmann S."/>
            <person name="Schwager C."/>
            <person name="Schweizer M."/>
            <person name="Sor F."/>
            <person name="Sterky F."/>
            <person name="Tarassov I.A."/>
            <person name="Teodoru C."/>
            <person name="Tettelin H."/>
            <person name="Thierry A."/>
            <person name="Tobiasch E."/>
            <person name="Tzermia M."/>
            <person name="Uhlen M."/>
            <person name="Unseld M."/>
            <person name="Valens M."/>
            <person name="Vandenbol M."/>
            <person name="Vetter I."/>
            <person name="Vlcek C."/>
            <person name="Voet M."/>
            <person name="Volckaert G."/>
            <person name="Voss H."/>
            <person name="Wambutt R."/>
            <person name="Wedler H."/>
            <person name="Wiemann S."/>
            <person name="Winsor B."/>
            <person name="Wolfe K.H."/>
            <person name="Zollner A."/>
            <person name="Zumstein E."/>
            <person name="Kleine K."/>
        </authorList>
    </citation>
    <scope>NUCLEOTIDE SEQUENCE [LARGE SCALE GENOMIC DNA]</scope>
    <source>
        <strain>ATCC 204508 / S288c</strain>
    </source>
</reference>
<reference key="3">
    <citation type="journal article" date="2014" name="G3 (Bethesda)">
        <title>The reference genome sequence of Saccharomyces cerevisiae: Then and now.</title>
        <authorList>
            <person name="Engel S.R."/>
            <person name="Dietrich F.S."/>
            <person name="Fisk D.G."/>
            <person name="Binkley G."/>
            <person name="Balakrishnan R."/>
            <person name="Costanzo M.C."/>
            <person name="Dwight S.S."/>
            <person name="Hitz B.C."/>
            <person name="Karra K."/>
            <person name="Nash R.S."/>
            <person name="Weng S."/>
            <person name="Wong E.D."/>
            <person name="Lloyd P."/>
            <person name="Skrzypek M.S."/>
            <person name="Miyasato S.R."/>
            <person name="Simison M."/>
            <person name="Cherry J.M."/>
        </authorList>
    </citation>
    <scope>GENOME REANNOTATION</scope>
    <source>
        <strain>ATCC 204508 / S288c</strain>
    </source>
</reference>
<reference key="4">
    <citation type="journal article" date="2007" name="Genome Res.">
        <title>Approaching a complete repository of sequence-verified protein-encoding clones for Saccharomyces cerevisiae.</title>
        <authorList>
            <person name="Hu Y."/>
            <person name="Rolfs A."/>
            <person name="Bhullar B."/>
            <person name="Murthy T.V.S."/>
            <person name="Zhu C."/>
            <person name="Berger M.F."/>
            <person name="Camargo A.A."/>
            <person name="Kelley F."/>
            <person name="McCarron S."/>
            <person name="Jepson D."/>
            <person name="Richardson A."/>
            <person name="Raphael J."/>
            <person name="Moreira D."/>
            <person name="Taycher E."/>
            <person name="Zuo D."/>
            <person name="Mohr S."/>
            <person name="Kane M.F."/>
            <person name="Williamson J."/>
            <person name="Simpson A.J.G."/>
            <person name="Bulyk M.L."/>
            <person name="Harlow E."/>
            <person name="Marsischky G."/>
            <person name="Kolodner R.D."/>
            <person name="LaBaer J."/>
        </authorList>
    </citation>
    <scope>NUCLEOTIDE SEQUENCE [GENOMIC DNA]</scope>
    <source>
        <strain>ATCC 204508 / S288c</strain>
    </source>
</reference>
<reference key="5">
    <citation type="journal article" date="2003" name="Nature">
        <title>Global analysis of protein localization in budding yeast.</title>
        <authorList>
            <person name="Huh W.-K."/>
            <person name="Falvo J.V."/>
            <person name="Gerke L.C."/>
            <person name="Carroll A.S."/>
            <person name="Howson R.W."/>
            <person name="Weissman J.S."/>
            <person name="O'Shea E.K."/>
        </authorList>
    </citation>
    <scope>SUBCELLULAR LOCATION [LARGE SCALE ANALYSIS]</scope>
</reference>
<reference key="6">
    <citation type="journal article" date="2006" name="Mol. Biol. Cell">
        <title>Proteomic analysis of the yeast mitochondrial outer membrane reveals accumulation of a subclass of preproteins.</title>
        <authorList>
            <person name="Zahedi R.P."/>
            <person name="Sickmann A."/>
            <person name="Boehm A.M."/>
            <person name="Winkler C."/>
            <person name="Zufall N."/>
            <person name="Schoenfisch B."/>
            <person name="Guiard B."/>
            <person name="Pfanner N."/>
            <person name="Meisinger C."/>
        </authorList>
    </citation>
    <scope>SUBCELLULAR LOCATION</scope>
    <scope>IDENTIFICATION BY MASS SPECTROMETRY</scope>
</reference>
<reference key="7">
    <citation type="journal article" date="2013" name="J. Cell Sci.">
        <title>Mcp1 and Mcp2, two novel proteins involved in mitochondrial lipid homeostasis.</title>
        <authorList>
            <person name="Tan T."/>
            <person name="Ozbalci C."/>
            <person name="Brugger B."/>
            <person name="Rapaport D."/>
            <person name="Dimmer K.S."/>
        </authorList>
    </citation>
    <scope>FUNCTION</scope>
    <scope>SUBCELLULAR LOCATION</scope>
    <scope>TOPOLOGY</scope>
</reference>
<reference key="8">
    <citation type="journal article" date="2017" name="J. Cell Biol.">
        <title>Vps13-Mcp1 interact at vacuole-mitochondria interfaces and bypass ER-mitochondria contact sites.</title>
        <authorList>
            <person name="John Peter A.T."/>
            <person name="Herrmann B."/>
            <person name="Antunes D."/>
            <person name="Rapaport D."/>
            <person name="Dimmer K.S."/>
            <person name="Kornmann B."/>
        </authorList>
    </citation>
    <scope>FUNCTION</scope>
    <scope>INTERACTION WITH VPS13</scope>
    <scope>TOPOLOGY</scope>
    <scope>MUTAGENESIS OF HIS-187; HIS-237 AND GLY-241</scope>
</reference>
<reference key="9">
    <citation type="journal article" date="2018" name="J. Cell Biol.">
        <title>Competitive organelle-specific adaptors recruit Vps13 to membrane contact sites.</title>
        <authorList>
            <person name="Bean B.D.M."/>
            <person name="Dziurdzik S.K."/>
            <person name="Kolehmainen K.L."/>
            <person name="Fowler C.M.S."/>
            <person name="Kwong W.K."/>
            <person name="Grad L.I."/>
            <person name="Davey M."/>
            <person name="Schluter C."/>
            <person name="Conibear E."/>
        </authorList>
    </citation>
    <scope>FUNCTION</scope>
    <scope>INTERACTION WITH VPS13</scope>
    <scope>MUTAGENESIS OF 4-LEU--VAL-12 AND 9-PRO--PRO-11</scope>
</reference>
<reference key="10">
    <citation type="journal article" date="2021" name="Int. J. Mol. Sci.">
        <title>The GTPase Arf1 Is a Determinant of Yeast Vps13 Localization to the Golgi Apparatus.</title>
        <authorList>
            <person name="Kolakowski D."/>
            <person name="Rzepnikowska W."/>
            <person name="Kaniak-Golik A."/>
            <person name="Zoladek T."/>
            <person name="Kaminska J."/>
        </authorList>
    </citation>
    <scope>FUNCTION</scope>
</reference>
<proteinExistence type="evidence at protein level"/>
<organism>
    <name type="scientific">Saccharomyces cerevisiae (strain ATCC 204508 / S288c)</name>
    <name type="common">Baker's yeast</name>
    <dbReference type="NCBI Taxonomy" id="559292"/>
    <lineage>
        <taxon>Eukaryota</taxon>
        <taxon>Fungi</taxon>
        <taxon>Dikarya</taxon>
        <taxon>Ascomycota</taxon>
        <taxon>Saccharomycotina</taxon>
        <taxon>Saccharomycetes</taxon>
        <taxon>Saccharomycetales</taxon>
        <taxon>Saccharomycetaceae</taxon>
        <taxon>Saccharomyces</taxon>
    </lineage>
</organism>
<feature type="chain" id="PRO_0000245281" description="Mitochondrial adapter protein MCP1">
    <location>
        <begin position="1"/>
        <end position="302"/>
    </location>
</feature>
<feature type="topological domain" description="Cytoplasmic" evidence="11 12">
    <location>
        <begin position="1"/>
        <end position="61"/>
    </location>
</feature>
<feature type="transmembrane region" description="Helical; Name=1" evidence="1">
    <location>
        <begin position="62"/>
        <end position="82"/>
    </location>
</feature>
<feature type="topological domain" description="Mitochondrial intermembrane" evidence="11 12">
    <location>
        <begin position="83"/>
        <end position="100"/>
    </location>
</feature>
<feature type="transmembrane region" description="Helical; Name=2" evidence="1">
    <location>
        <begin position="101"/>
        <end position="121"/>
    </location>
</feature>
<feature type="topological domain" description="Cytoplasmic" evidence="11 12">
    <location>
        <begin position="122"/>
        <end position="173"/>
    </location>
</feature>
<feature type="transmembrane region" description="Helical; Name=3" evidence="1">
    <location>
        <begin position="174"/>
        <end position="194"/>
    </location>
</feature>
<feature type="topological domain" description="Mitochondrial intermembrane" evidence="11 12">
    <location>
        <begin position="195"/>
        <end position="219"/>
    </location>
</feature>
<feature type="transmembrane region" description="Helical; Name=4" evidence="1">
    <location>
        <begin position="220"/>
        <end position="240"/>
    </location>
</feature>
<feature type="topological domain" description="Cytoplasmic" evidence="11 12">
    <location>
        <begin position="241"/>
        <end position="258"/>
    </location>
</feature>
<feature type="transmembrane region" description="Helical; Name=5" evidence="1">
    <location>
        <begin position="259"/>
        <end position="276"/>
    </location>
</feature>
<feature type="topological domain" description="Mitochondrial intermembrane" evidence="5 12">
    <location>
        <begin position="277"/>
        <end position="302"/>
    </location>
</feature>
<feature type="region of interest" description="Disordered" evidence="2">
    <location>
        <begin position="1"/>
        <end position="35"/>
    </location>
</feature>
<feature type="short sequence motif" description="PxP" evidence="7">
    <location>
        <begin position="4"/>
        <end position="12"/>
    </location>
</feature>
<feature type="mutagenesis site" description="Disrupts interaction with VPS13." evidence="7">
    <location>
        <begin position="4"/>
        <end position="12"/>
    </location>
</feature>
<feature type="mutagenesis site" description="Disrupts interaction with VPS13." evidence="7">
    <original>PEP</original>
    <variation>AEA</variation>
    <location>
        <begin position="9"/>
        <end position="11"/>
    </location>
</feature>
<feature type="mutagenesis site" description="Disrupts activity." evidence="6">
    <original>H</original>
    <variation>A</variation>
    <location>
        <position position="187"/>
    </location>
</feature>
<feature type="mutagenesis site" description="Disrupts activity." evidence="6">
    <original>H</original>
    <variation>A</variation>
    <location>
        <position position="237"/>
    </location>
</feature>
<feature type="mutagenesis site" description="Disrupts activity." evidence="6">
    <original>G</original>
    <variation>A</variation>
    <location>
        <position position="241"/>
    </location>
</feature>
<protein>
    <recommendedName>
        <fullName evidence="10">Mitochondrial adapter protein MCP1</fullName>
    </recommendedName>
    <alternativeName>
        <fullName evidence="9">MDM10-complementing protein 1</fullName>
    </alternativeName>
</protein>